<keyword id="KW-0134">Cell wall</keyword>
<keyword id="KW-1015">Disulfide bond</keyword>
<keyword id="KW-0964">Secreted</keyword>
<keyword id="KW-0732">Signal</keyword>
<feature type="signal peptide" evidence="2">
    <location>
        <begin position="1"/>
        <end position="27"/>
    </location>
</feature>
<feature type="chain" id="PRO_0000462412" description="Class I hydrophobin Po.HYD">
    <location>
        <begin position="28"/>
        <end position="110"/>
    </location>
</feature>
<feature type="disulfide bond" evidence="1">
    <location>
        <begin position="35"/>
        <end position="91"/>
    </location>
</feature>
<feature type="disulfide bond" evidence="1">
    <location>
        <begin position="42"/>
        <end position="85"/>
    </location>
</feature>
<feature type="disulfide bond" evidence="1">
    <location>
        <begin position="43"/>
        <end position="75"/>
    </location>
</feature>
<feature type="disulfide bond" evidence="1">
    <location>
        <begin position="92"/>
        <end position="105"/>
    </location>
</feature>
<dbReference type="EMBL" id="AF331452">
    <property type="protein sequence ID" value="AAL57034.1"/>
    <property type="molecule type" value="mRNA"/>
</dbReference>
<dbReference type="SMR" id="Q8X1N0"/>
<dbReference type="VEuPathDB" id="FungiDB:PC9H_002548"/>
<dbReference type="VEuPathDB" id="FungiDB:PLEOSDRAFT_1114709"/>
<dbReference type="GO" id="GO:0005576">
    <property type="term" value="C:extracellular region"/>
    <property type="evidence" value="ECO:0007669"/>
    <property type="project" value="UniProtKB-KW"/>
</dbReference>
<dbReference type="GO" id="GO:0009277">
    <property type="term" value="C:fungal-type cell wall"/>
    <property type="evidence" value="ECO:0007669"/>
    <property type="project" value="InterPro"/>
</dbReference>
<dbReference type="GO" id="GO:0005199">
    <property type="term" value="F:structural constituent of cell wall"/>
    <property type="evidence" value="ECO:0007669"/>
    <property type="project" value="InterPro"/>
</dbReference>
<dbReference type="CDD" id="cd23507">
    <property type="entry name" value="hydrophobin_I"/>
    <property type="match status" value="1"/>
</dbReference>
<dbReference type="InterPro" id="IPR001338">
    <property type="entry name" value="Hydrophobin"/>
</dbReference>
<dbReference type="Pfam" id="PF01185">
    <property type="entry name" value="Hydrophobin"/>
    <property type="match status" value="1"/>
</dbReference>
<dbReference type="SMART" id="SM00075">
    <property type="entry name" value="HYDRO"/>
    <property type="match status" value="1"/>
</dbReference>
<reference key="1">
    <citation type="journal article" date="2007" name="J. Basic Microbiol.">
        <title>Characterization of a Pleurotus ostreatus fruiting body-specific hydrophobin gene, Po.hyd.</title>
        <authorList>
            <person name="Ma A."/>
            <person name="Shan L."/>
            <person name="Wang N."/>
            <person name="Zheng L."/>
            <person name="Chen L."/>
            <person name="Xie B."/>
        </authorList>
    </citation>
    <scope>NUCLEOTIDE SEQUENCE [MRNA]</scope>
    <scope>DEVELOPMENTAL STAGE</scope>
</reference>
<reference key="2">
    <citation type="journal article" date="2017" name="Biotechnol. Lett.">
        <title>Use of the yeast-like cells of Tremella fuciformis as a cell factory to produce a Pleurotus ostreatus hydrophobin.</title>
        <authorList>
            <person name="Zhu H."/>
            <person name="Liu D."/>
            <person name="Wang Y."/>
            <person name="Ren D."/>
            <person name="Zheng L."/>
            <person name="Chen L."/>
            <person name="Ma A."/>
        </authorList>
    </citation>
    <scope>BIOTECHNOLOGY</scope>
</reference>
<sequence length="110" mass="11407">MFSKATLFFTTVSRYRDTQAPIPTGQTNQPTTNQCNTGPVQCCDTTQSASDPINIPGMGLVHVSNANGLVAFGNCSPLVSGGSKCNNQAVCCNGTEFNGLVNVGCTNVSL</sequence>
<proteinExistence type="evidence at protein level"/>
<evidence type="ECO:0000250" key="1">
    <source>
        <dbReference type="UniProtKB" id="Q04571"/>
    </source>
</evidence>
<evidence type="ECO:0000255" key="2"/>
<evidence type="ECO:0000269" key="3">
    <source>
    </source>
</evidence>
<evidence type="ECO:0000269" key="4">
    <source>
    </source>
</evidence>
<evidence type="ECO:0000303" key="5">
    <source>
    </source>
</evidence>
<evidence type="ECO:0000305" key="6"/>
<name>POHYD_PLEOS</name>
<accession>Q8X1N0</accession>
<gene>
    <name evidence="5" type="primary">Po.HYD</name>
</gene>
<protein>
    <recommendedName>
        <fullName evidence="5">Class I hydrophobin Po.HYD</fullName>
    </recommendedName>
</protein>
<comment type="function">
    <text evidence="6">Aerial growth, conidiation, and dispersal of filamentous fungi in the environment rely upon a capability of their secreting small amphipathic proteins called hydrophobins (HPBs) with low sequence identity. Class I can self-assemble into an outermost layer of rodlet bundles on aerial cell surfaces, conferring cellular hydrophobicity that supports fungal growth, development and dispersal; whereas Class II form highly ordered films at water-air interfaces through intermolecular interactions but contribute nothing to the rodlet structure.</text>
</comment>
<comment type="subunit">
    <text evidence="1">Self-assembles to form functional amyloid fibrils called rodlets. Self-assembly into fibrillar rodlets occurs spontaneously at hydrophobic:hydrophilic interfaces and the rodlets further associate laterally to form amphipathic monolayers.</text>
</comment>
<comment type="subcellular location">
    <subcellularLocation>
        <location>Secreted</location>
    </subcellularLocation>
    <subcellularLocation>
        <location>Secreted</location>
        <location>Cell wall</location>
    </subcellularLocation>
</comment>
<comment type="developmental stage">
    <text evidence="3">Abundantly expressed throughout the fruiting process (from primordium to mature fruiting body) but silenced during vegetative growth of the mycelium.</text>
</comment>
<comment type="biotechnology">
    <text evidence="4">With its ability to stabilize oil droplets, exhibits a better emulsifying activity than the typical food emulsifiers Tween 20 and sodium caseinate and can be used for the food industry.</text>
</comment>
<comment type="similarity">
    <text evidence="6">Belongs to the fungal hydrophobin family.</text>
</comment>
<organism>
    <name type="scientific">Pleurotus ostreatus</name>
    <name type="common">Oyster mushroom</name>
    <name type="synonym">White-rot fungus</name>
    <dbReference type="NCBI Taxonomy" id="5322"/>
    <lineage>
        <taxon>Eukaryota</taxon>
        <taxon>Fungi</taxon>
        <taxon>Dikarya</taxon>
        <taxon>Basidiomycota</taxon>
        <taxon>Agaricomycotina</taxon>
        <taxon>Agaricomycetes</taxon>
        <taxon>Agaricomycetidae</taxon>
        <taxon>Agaricales</taxon>
        <taxon>Pleurotineae</taxon>
        <taxon>Pleurotaceae</taxon>
        <taxon>Pleurotus</taxon>
    </lineage>
</organism>